<sequence>MSFKKIIKAFVIMAALVSVQAHAGASQFFKDNCNRTTASLVEGVELTKYISDINNNTDGMYVVSSTGGVWRISRAKDYPDNVMTAEMRKIAMAAVLSGMRVNMCASPASSPNVIWAIELEAE</sequence>
<proteinExistence type="evidence at protein level"/>
<name>E2BB_ECOLX</name>
<evidence type="ECO:0007829" key="1">
    <source>
        <dbReference type="PDB" id="4FP5"/>
    </source>
</evidence>
<comment type="function">
    <text>The biological activity of the toxin is produced by the A chain, which activates intracellular adenyl cyclase.</text>
</comment>
<comment type="subunit">
    <text>Heterohexamer of one A chain and of five B chains.</text>
</comment>
<keyword id="KW-0002">3D-structure</keyword>
<keyword id="KW-1015">Disulfide bond</keyword>
<keyword id="KW-0260">Enterotoxin</keyword>
<keyword id="KW-0732">Signal</keyword>
<keyword id="KW-0800">Toxin</keyword>
<keyword id="KW-0843">Virulence</keyword>
<reference key="1">
    <citation type="journal article" date="1989" name="J. Bacteriol.">
        <title>Cloning, nucleotide sequence, and hybridization studies of the type IIb heat-labile enterotoxin gene of Escherichia coli.</title>
        <authorList>
            <person name="Pickett C.L."/>
            <person name="Twiddy E.M."/>
            <person name="Coker C."/>
            <person name="Holmes R.K."/>
        </authorList>
    </citation>
    <scope>NUCLEOTIDE SEQUENCE [GENOMIC DNA]</scope>
    <source>
        <strain>Isolate 41</strain>
    </source>
</reference>
<reference key="2">
    <citation type="journal article" date="1996" name="Structure">
        <title>Crystal structure of a new heat-labile enterotoxin, LT-IIb.</title>
        <authorList>
            <person name="van den Akker F."/>
            <person name="Sarfaty S."/>
            <person name="Twiddy E.M."/>
            <person name="Connell T.D."/>
            <person name="Holmes R.K."/>
            <person name="Hol W.G.J."/>
        </authorList>
    </citation>
    <scope>X-RAY CRYSTALLOGRAPHY (2.25 ANGSTROMS)</scope>
</reference>
<organism>
    <name type="scientific">Escherichia coli</name>
    <dbReference type="NCBI Taxonomy" id="562"/>
    <lineage>
        <taxon>Bacteria</taxon>
        <taxon>Pseudomonadati</taxon>
        <taxon>Pseudomonadota</taxon>
        <taxon>Gammaproteobacteria</taxon>
        <taxon>Enterobacterales</taxon>
        <taxon>Enterobacteriaceae</taxon>
        <taxon>Escherichia</taxon>
    </lineage>
</organism>
<dbReference type="EMBL" id="JQ031712">
    <property type="protein sequence ID" value="AAA53286.1"/>
    <property type="molecule type" value="Genomic_DNA"/>
</dbReference>
<dbReference type="PIR" id="B33959">
    <property type="entry name" value="B33959"/>
</dbReference>
<dbReference type="RefSeq" id="WP_096985491.1">
    <property type="nucleotide sequence ID" value="NZ_CP076285.1"/>
</dbReference>
<dbReference type="PDB" id="1QB5">
    <property type="method" value="X-ray"/>
    <property type="resolution" value="1.90 A"/>
    <property type="chains" value="D/E/F/G/H=24-122"/>
</dbReference>
<dbReference type="PDB" id="1QCB">
    <property type="method" value="X-ray"/>
    <property type="resolution" value="2.20 A"/>
    <property type="chains" value="D/E/F/G/H=24-122"/>
</dbReference>
<dbReference type="PDB" id="1TII">
    <property type="method" value="X-ray"/>
    <property type="resolution" value="2.25 A"/>
    <property type="chains" value="D/E/F/G/H=24-122"/>
</dbReference>
<dbReference type="PDB" id="4FNF">
    <property type="method" value="X-ray"/>
    <property type="resolution" value="1.75 A"/>
    <property type="chains" value="A/B/C/D/E/F/G/H/I/J=24-121"/>
</dbReference>
<dbReference type="PDB" id="4FO2">
    <property type="method" value="X-ray"/>
    <property type="resolution" value="1.50 A"/>
    <property type="chains" value="A/B/C/D/E/F/G/H/I/J/K/L/M/N/O/P/Q/R/S/T=24-121"/>
</dbReference>
<dbReference type="PDB" id="4FP5">
    <property type="method" value="X-ray"/>
    <property type="resolution" value="1.40 A"/>
    <property type="chains" value="D/E/F/G/H=24-121"/>
</dbReference>
<dbReference type="PDB" id="5G3L">
    <property type="method" value="X-ray"/>
    <property type="resolution" value="1.72 A"/>
    <property type="chains" value="D/E/F/G/H=24-122"/>
</dbReference>
<dbReference type="PDB" id="8GUF">
    <property type="method" value="X-ray"/>
    <property type="resolution" value="1.99 A"/>
    <property type="chains" value="A/B/C/D/E=24-122"/>
</dbReference>
<dbReference type="PDB" id="8GW2">
    <property type="method" value="X-ray"/>
    <property type="resolution" value="2.71 A"/>
    <property type="chains" value="A/B/C/D/E=37-122"/>
</dbReference>
<dbReference type="PDB" id="8H2R">
    <property type="method" value="X-ray"/>
    <property type="resolution" value="2.90 A"/>
    <property type="chains" value="A/B/C/D/E=15-76"/>
</dbReference>
<dbReference type="PDBsum" id="1QB5"/>
<dbReference type="PDBsum" id="1QCB"/>
<dbReference type="PDBsum" id="1TII"/>
<dbReference type="PDBsum" id="4FNF"/>
<dbReference type="PDBsum" id="4FO2"/>
<dbReference type="PDBsum" id="4FP5"/>
<dbReference type="PDBsum" id="5G3L"/>
<dbReference type="PDBsum" id="8GUF"/>
<dbReference type="PDBsum" id="8GW2"/>
<dbReference type="PDBsum" id="8H2R"/>
<dbReference type="SMR" id="P43529"/>
<dbReference type="ComplexPortal" id="CPX-2304">
    <property type="entry name" value="Heat-labile enterotoxin IIB complex"/>
</dbReference>
<dbReference type="DIP" id="DIP-6217N"/>
<dbReference type="IntAct" id="P43529">
    <property type="interactions" value="1"/>
</dbReference>
<dbReference type="UniLectin" id="P43529"/>
<dbReference type="EvolutionaryTrace" id="P43529"/>
<dbReference type="GO" id="GO:0005576">
    <property type="term" value="C:extracellular region"/>
    <property type="evidence" value="ECO:0007669"/>
    <property type="project" value="InterPro"/>
</dbReference>
<dbReference type="GO" id="GO:0033644">
    <property type="term" value="C:host cell membrane"/>
    <property type="evidence" value="ECO:0000303"/>
    <property type="project" value="ComplexPortal"/>
</dbReference>
<dbReference type="GO" id="GO:0090729">
    <property type="term" value="F:toxin activity"/>
    <property type="evidence" value="ECO:0007669"/>
    <property type="project" value="UniProtKB-KW"/>
</dbReference>
<dbReference type="Gene3D" id="2.40.50.50">
    <property type="match status" value="1"/>
</dbReference>
<dbReference type="InterPro" id="IPR008992">
    <property type="entry name" value="Enterotoxin"/>
</dbReference>
<dbReference type="InterPro" id="IPR010503">
    <property type="entry name" value="LT-IIB"/>
</dbReference>
<dbReference type="InterPro" id="IPR038629">
    <property type="entry name" value="LT-IIB_sf"/>
</dbReference>
<dbReference type="Pfam" id="PF06453">
    <property type="entry name" value="LT-IIB"/>
    <property type="match status" value="1"/>
</dbReference>
<dbReference type="PIRSF" id="PIRSF019554">
    <property type="entry name" value="LT-IIB"/>
    <property type="match status" value="1"/>
</dbReference>
<dbReference type="SUPFAM" id="SSF50203">
    <property type="entry name" value="Bacterial enterotoxins"/>
    <property type="match status" value="1"/>
</dbReference>
<feature type="signal peptide">
    <location>
        <begin position="1"/>
        <end position="23"/>
    </location>
</feature>
<feature type="chain" id="PRO_0000019358" description="Heat-labile enterotoxin IIB, B chain">
    <location>
        <begin position="24"/>
        <end position="122"/>
    </location>
</feature>
<feature type="disulfide bond">
    <location>
        <begin position="33"/>
        <end position="104"/>
    </location>
</feature>
<feature type="helix" evidence="1">
    <location>
        <begin position="27"/>
        <end position="34"/>
    </location>
</feature>
<feature type="strand" evidence="1">
    <location>
        <begin position="36"/>
        <end position="52"/>
    </location>
</feature>
<feature type="turn" evidence="1">
    <location>
        <begin position="55"/>
        <end position="57"/>
    </location>
</feature>
<feature type="strand" evidence="1">
    <location>
        <begin position="59"/>
        <end position="64"/>
    </location>
</feature>
<feature type="strand" evidence="1">
    <location>
        <begin position="69"/>
        <end position="72"/>
    </location>
</feature>
<feature type="helix" evidence="1">
    <location>
        <begin position="80"/>
        <end position="97"/>
    </location>
</feature>
<feature type="strand" evidence="1">
    <location>
        <begin position="100"/>
        <end position="106"/>
    </location>
</feature>
<feature type="strand" evidence="1">
    <location>
        <begin position="109"/>
        <end position="120"/>
    </location>
</feature>
<protein>
    <recommendedName>
        <fullName>Heat-labile enterotoxin IIB, B chain</fullName>
        <shortName>LT-IIB</shortName>
    </recommendedName>
</protein>
<accession>P43529</accession>